<sequence>MHLLDTLAEGLKEIDARGLRRRRRTADTPCAAHMTVDGRAIIGFASNDYLGLAAHPQLIAAIAEGAQRYGAGSGGSHLLGGHSRAHAQLEDDLAEFVGGFVENARALYFSTGYMANLATLTALAGRGTTLFSDALNHASLIDGARLSRADVQIYPHCDTDALSAMLEASDADVKVIVSDTVFSMDGDIAPLPRLLELAEQHGAWLIVDDAHGFGVLGPQGRGAIAQAALRSPNLISIGTLGKAAGVSGAFVAAHETVIEWLVQRARPYIFTTASVPAAAHAVSASLRIIGGEEGDARRAHLQQLIGRTRAMLKATPWLPVDSHTAVQPLIIGANDATLEIAATLDRAGLWVPAIRPPTVPTGTSRLRISLSAAHSQADLDRLEAGLQQLGAKAA</sequence>
<name>BIOF_PARXL</name>
<accession>Q146K3</accession>
<reference key="1">
    <citation type="journal article" date="2006" name="Proc. Natl. Acad. Sci. U.S.A.">
        <title>Burkholderia xenovorans LB400 harbors a multi-replicon, 9.73-Mbp genome shaped for versatility.</title>
        <authorList>
            <person name="Chain P.S.G."/>
            <person name="Denef V.J."/>
            <person name="Konstantinidis K.T."/>
            <person name="Vergez L.M."/>
            <person name="Agullo L."/>
            <person name="Reyes V.L."/>
            <person name="Hauser L."/>
            <person name="Cordova M."/>
            <person name="Gomez L."/>
            <person name="Gonzalez M."/>
            <person name="Land M."/>
            <person name="Lao V."/>
            <person name="Larimer F."/>
            <person name="LiPuma J.J."/>
            <person name="Mahenthiralingam E."/>
            <person name="Malfatti S.A."/>
            <person name="Marx C.J."/>
            <person name="Parnell J.J."/>
            <person name="Ramette A."/>
            <person name="Richardson P."/>
            <person name="Seeger M."/>
            <person name="Smith D."/>
            <person name="Spilker T."/>
            <person name="Sul W.J."/>
            <person name="Tsoi T.V."/>
            <person name="Ulrich L.E."/>
            <person name="Zhulin I.B."/>
            <person name="Tiedje J.M."/>
        </authorList>
    </citation>
    <scope>NUCLEOTIDE SEQUENCE [LARGE SCALE GENOMIC DNA]</scope>
    <source>
        <strain>LB400</strain>
    </source>
</reference>
<feature type="chain" id="PRO_0000380947" description="8-amino-7-oxononanoate synthase">
    <location>
        <begin position="1"/>
        <end position="394"/>
    </location>
</feature>
<feature type="binding site" evidence="1">
    <location>
        <position position="21"/>
    </location>
    <ligand>
        <name>substrate</name>
    </ligand>
</feature>
<feature type="binding site" evidence="1">
    <location>
        <begin position="112"/>
        <end position="113"/>
    </location>
    <ligand>
        <name>pyridoxal 5'-phosphate</name>
        <dbReference type="ChEBI" id="CHEBI:597326"/>
    </ligand>
</feature>
<feature type="binding site" evidence="1">
    <location>
        <position position="137"/>
    </location>
    <ligand>
        <name>substrate</name>
    </ligand>
</feature>
<feature type="binding site" evidence="1">
    <location>
        <position position="183"/>
    </location>
    <ligand>
        <name>pyridoxal 5'-phosphate</name>
        <dbReference type="ChEBI" id="CHEBI:597326"/>
    </ligand>
</feature>
<feature type="binding site" evidence="1">
    <location>
        <position position="211"/>
    </location>
    <ligand>
        <name>pyridoxal 5'-phosphate</name>
        <dbReference type="ChEBI" id="CHEBI:597326"/>
    </ligand>
</feature>
<feature type="binding site" evidence="1">
    <location>
        <position position="239"/>
    </location>
    <ligand>
        <name>pyridoxal 5'-phosphate</name>
        <dbReference type="ChEBI" id="CHEBI:597326"/>
    </ligand>
</feature>
<feature type="binding site" evidence="1">
    <location>
        <position position="358"/>
    </location>
    <ligand>
        <name>substrate</name>
    </ligand>
</feature>
<feature type="modified residue" description="N6-(pyridoxal phosphate)lysine" evidence="1">
    <location>
        <position position="242"/>
    </location>
</feature>
<feature type="helix" evidence="2">
    <location>
        <begin position="3"/>
        <end position="16"/>
    </location>
</feature>
<feature type="strand" evidence="2">
    <location>
        <begin position="26"/>
        <end position="28"/>
    </location>
</feature>
<feature type="strand" evidence="2">
    <location>
        <begin position="30"/>
        <end position="36"/>
    </location>
</feature>
<feature type="strand" evidence="2">
    <location>
        <begin position="39"/>
        <end position="43"/>
    </location>
</feature>
<feature type="helix" evidence="2">
    <location>
        <begin position="56"/>
        <end position="69"/>
    </location>
</feature>
<feature type="helix" evidence="2">
    <location>
        <begin position="84"/>
        <end position="97"/>
    </location>
</feature>
<feature type="strand" evidence="2">
    <location>
        <begin position="104"/>
        <end position="111"/>
    </location>
</feature>
<feature type="helix" evidence="2">
    <location>
        <begin position="112"/>
        <end position="123"/>
    </location>
</feature>
<feature type="strand" evidence="2">
    <location>
        <begin position="128"/>
        <end position="133"/>
    </location>
</feature>
<feature type="helix" evidence="2">
    <location>
        <begin position="138"/>
        <end position="146"/>
    </location>
</feature>
<feature type="strand" evidence="2">
    <location>
        <begin position="149"/>
        <end position="154"/>
    </location>
</feature>
<feature type="helix" evidence="2">
    <location>
        <begin position="159"/>
        <end position="167"/>
    </location>
</feature>
<feature type="strand" evidence="2">
    <location>
        <begin position="172"/>
        <end position="181"/>
    </location>
</feature>
<feature type="turn" evidence="2">
    <location>
        <begin position="183"/>
        <end position="185"/>
    </location>
</feature>
<feature type="helix" evidence="2">
    <location>
        <begin position="191"/>
        <end position="200"/>
    </location>
</feature>
<feature type="strand" evidence="2">
    <location>
        <begin position="204"/>
        <end position="208"/>
    </location>
</feature>
<feature type="turn" evidence="2">
    <location>
        <begin position="210"/>
        <end position="215"/>
    </location>
</feature>
<feature type="helix" evidence="2">
    <location>
        <begin position="218"/>
        <end position="220"/>
    </location>
</feature>
<feature type="helix" evidence="2">
    <location>
        <begin position="223"/>
        <end position="226"/>
    </location>
</feature>
<feature type="strand" evidence="2">
    <location>
        <begin position="234"/>
        <end position="242"/>
    </location>
</feature>
<feature type="strand" evidence="2">
    <location>
        <begin position="249"/>
        <end position="254"/>
    </location>
</feature>
<feature type="helix" evidence="2">
    <location>
        <begin position="255"/>
        <end position="264"/>
    </location>
</feature>
<feature type="helix" evidence="2">
    <location>
        <begin position="267"/>
        <end position="270"/>
    </location>
</feature>
<feature type="helix" evidence="2">
    <location>
        <begin position="276"/>
        <end position="289"/>
    </location>
</feature>
<feature type="helix" evidence="2">
    <location>
        <begin position="292"/>
        <end position="314"/>
    </location>
</feature>
<feature type="strand" evidence="2">
    <location>
        <begin position="315"/>
        <end position="319"/>
    </location>
</feature>
<feature type="strand" evidence="2">
    <location>
        <begin position="323"/>
        <end position="333"/>
    </location>
</feature>
<feature type="helix" evidence="2">
    <location>
        <begin position="334"/>
        <end position="346"/>
    </location>
</feature>
<feature type="strand" evidence="2">
    <location>
        <begin position="364"/>
        <end position="369"/>
    </location>
</feature>
<feature type="helix" evidence="2">
    <location>
        <begin position="376"/>
        <end position="388"/>
    </location>
</feature>
<organism>
    <name type="scientific">Paraburkholderia xenovorans (strain LB400)</name>
    <dbReference type="NCBI Taxonomy" id="266265"/>
    <lineage>
        <taxon>Bacteria</taxon>
        <taxon>Pseudomonadati</taxon>
        <taxon>Pseudomonadota</taxon>
        <taxon>Betaproteobacteria</taxon>
        <taxon>Burkholderiales</taxon>
        <taxon>Burkholderiaceae</taxon>
        <taxon>Paraburkholderia</taxon>
    </lineage>
</organism>
<dbReference type="EC" id="2.3.1.47" evidence="1"/>
<dbReference type="EMBL" id="CP000270">
    <property type="protein sequence ID" value="ABE28736.1"/>
    <property type="molecule type" value="Genomic_DNA"/>
</dbReference>
<dbReference type="RefSeq" id="WP_011486581.1">
    <property type="nucleotide sequence ID" value="NC_007951.1"/>
</dbReference>
<dbReference type="PDB" id="5JAY">
    <property type="method" value="X-ray"/>
    <property type="resolution" value="1.75 A"/>
    <property type="chains" value="A/B=1-394"/>
</dbReference>
<dbReference type="PDBsum" id="5JAY"/>
<dbReference type="SMR" id="Q146K3"/>
<dbReference type="STRING" id="266265.Bxe_A4264"/>
<dbReference type="KEGG" id="bxb:DR64_1940"/>
<dbReference type="KEGG" id="bxe:Bxe_A4264"/>
<dbReference type="PATRIC" id="fig|266265.5.peg.209"/>
<dbReference type="eggNOG" id="COG0156">
    <property type="taxonomic scope" value="Bacteria"/>
</dbReference>
<dbReference type="OrthoDB" id="9807157at2"/>
<dbReference type="UniPathway" id="UPA00078"/>
<dbReference type="EvolutionaryTrace" id="Q146K3"/>
<dbReference type="Proteomes" id="UP000001817">
    <property type="component" value="Chromosome 1"/>
</dbReference>
<dbReference type="GO" id="GO:0008710">
    <property type="term" value="F:8-amino-7-oxononanoate synthase activity"/>
    <property type="evidence" value="ECO:0007669"/>
    <property type="project" value="UniProtKB-UniRule"/>
</dbReference>
<dbReference type="GO" id="GO:0030170">
    <property type="term" value="F:pyridoxal phosphate binding"/>
    <property type="evidence" value="ECO:0007669"/>
    <property type="project" value="UniProtKB-UniRule"/>
</dbReference>
<dbReference type="GO" id="GO:0009102">
    <property type="term" value="P:biotin biosynthetic process"/>
    <property type="evidence" value="ECO:0007669"/>
    <property type="project" value="UniProtKB-UniRule"/>
</dbReference>
<dbReference type="Gene3D" id="3.90.1150.10">
    <property type="entry name" value="Aspartate Aminotransferase, domain 1"/>
    <property type="match status" value="1"/>
</dbReference>
<dbReference type="Gene3D" id="3.40.640.10">
    <property type="entry name" value="Type I PLP-dependent aspartate aminotransferase-like (Major domain)"/>
    <property type="match status" value="1"/>
</dbReference>
<dbReference type="HAMAP" id="MF_01693">
    <property type="entry name" value="BioF_aminotrans_2"/>
    <property type="match status" value="1"/>
</dbReference>
<dbReference type="InterPro" id="IPR004839">
    <property type="entry name" value="Aminotransferase_I/II_large"/>
</dbReference>
<dbReference type="InterPro" id="IPR050087">
    <property type="entry name" value="AON_synthase_class-II"/>
</dbReference>
<dbReference type="InterPro" id="IPR004723">
    <property type="entry name" value="AONS_Archaea/Proteobacteria"/>
</dbReference>
<dbReference type="InterPro" id="IPR022834">
    <property type="entry name" value="AONS_Proteobacteria"/>
</dbReference>
<dbReference type="InterPro" id="IPR015424">
    <property type="entry name" value="PyrdxlP-dep_Trfase"/>
</dbReference>
<dbReference type="InterPro" id="IPR015421">
    <property type="entry name" value="PyrdxlP-dep_Trfase_major"/>
</dbReference>
<dbReference type="InterPro" id="IPR015422">
    <property type="entry name" value="PyrdxlP-dep_Trfase_small"/>
</dbReference>
<dbReference type="NCBIfam" id="TIGR00858">
    <property type="entry name" value="bioF"/>
    <property type="match status" value="1"/>
</dbReference>
<dbReference type="PANTHER" id="PTHR13693:SF100">
    <property type="entry name" value="8-AMINO-7-OXONONANOATE SYNTHASE"/>
    <property type="match status" value="1"/>
</dbReference>
<dbReference type="PANTHER" id="PTHR13693">
    <property type="entry name" value="CLASS II AMINOTRANSFERASE/8-AMINO-7-OXONONANOATE SYNTHASE"/>
    <property type="match status" value="1"/>
</dbReference>
<dbReference type="Pfam" id="PF00155">
    <property type="entry name" value="Aminotran_1_2"/>
    <property type="match status" value="1"/>
</dbReference>
<dbReference type="SUPFAM" id="SSF53383">
    <property type="entry name" value="PLP-dependent transferases"/>
    <property type="match status" value="1"/>
</dbReference>
<protein>
    <recommendedName>
        <fullName evidence="1">8-amino-7-oxononanoate synthase</fullName>
        <shortName evidence="1">AONS</shortName>
        <ecNumber evidence="1">2.3.1.47</ecNumber>
    </recommendedName>
    <alternativeName>
        <fullName evidence="1">7-keto-8-amino-pelargonic acid synthase</fullName>
        <shortName evidence="1">7-KAP synthase</shortName>
        <shortName evidence="1">KAPA synthase</shortName>
    </alternativeName>
    <alternativeName>
        <fullName evidence="1">8-amino-7-ketopelargonate synthase</fullName>
    </alternativeName>
</protein>
<gene>
    <name evidence="1" type="primary">bioF</name>
    <name type="ordered locus">Bxeno_A0198</name>
    <name type="ORF">Bxe_A4264</name>
</gene>
<keyword id="KW-0002">3D-structure</keyword>
<keyword id="KW-0093">Biotin biosynthesis</keyword>
<keyword id="KW-0663">Pyridoxal phosphate</keyword>
<keyword id="KW-1185">Reference proteome</keyword>
<keyword id="KW-0808">Transferase</keyword>
<comment type="function">
    <text evidence="1">Catalyzes the decarboxylative condensation of pimeloyl-[acyl-carrier protein] and L-alanine to produce 8-amino-7-oxononanoate (AON), [acyl-carrier protein], and carbon dioxide.</text>
</comment>
<comment type="catalytic activity">
    <reaction evidence="1">
        <text>6-carboxyhexanoyl-[ACP] + L-alanine + H(+) = (8S)-8-amino-7-oxononanoate + holo-[ACP] + CO2</text>
        <dbReference type="Rhea" id="RHEA:42288"/>
        <dbReference type="Rhea" id="RHEA-COMP:9685"/>
        <dbReference type="Rhea" id="RHEA-COMP:9955"/>
        <dbReference type="ChEBI" id="CHEBI:15378"/>
        <dbReference type="ChEBI" id="CHEBI:16526"/>
        <dbReference type="ChEBI" id="CHEBI:57972"/>
        <dbReference type="ChEBI" id="CHEBI:64479"/>
        <dbReference type="ChEBI" id="CHEBI:78846"/>
        <dbReference type="ChEBI" id="CHEBI:149468"/>
        <dbReference type="EC" id="2.3.1.47"/>
    </reaction>
</comment>
<comment type="cofactor">
    <cofactor evidence="1">
        <name>pyridoxal 5'-phosphate</name>
        <dbReference type="ChEBI" id="CHEBI:597326"/>
    </cofactor>
</comment>
<comment type="pathway">
    <text evidence="1">Cofactor biosynthesis; biotin biosynthesis.</text>
</comment>
<comment type="subunit">
    <text evidence="1">Homodimer.</text>
</comment>
<comment type="similarity">
    <text evidence="1">Belongs to the class-II pyridoxal-phosphate-dependent aminotransferase family. BioF subfamily.</text>
</comment>
<proteinExistence type="evidence at protein level"/>
<evidence type="ECO:0000255" key="1">
    <source>
        <dbReference type="HAMAP-Rule" id="MF_01693"/>
    </source>
</evidence>
<evidence type="ECO:0007829" key="2">
    <source>
        <dbReference type="PDB" id="5JAY"/>
    </source>
</evidence>